<evidence type="ECO:0000255" key="1">
    <source>
        <dbReference type="HAMAP-Rule" id="MF_01337"/>
    </source>
</evidence>
<evidence type="ECO:0000256" key="2">
    <source>
        <dbReference type="SAM" id="MobiDB-lite"/>
    </source>
</evidence>
<evidence type="ECO:0000305" key="3"/>
<protein>
    <recommendedName>
        <fullName evidence="1">Large ribosomal subunit protein uL18</fullName>
    </recommendedName>
    <alternativeName>
        <fullName evidence="3">50S ribosomal protein L18</fullName>
    </alternativeName>
</protein>
<accession>Q5XEB9</accession>
<keyword id="KW-0687">Ribonucleoprotein</keyword>
<keyword id="KW-0689">Ribosomal protein</keyword>
<keyword id="KW-0694">RNA-binding</keyword>
<keyword id="KW-0699">rRNA-binding</keyword>
<reference key="1">
    <citation type="journal article" date="2004" name="J. Infect. Dis.">
        <title>Progress toward characterization of the group A Streptococcus metagenome: complete genome sequence of a macrolide-resistant serotype M6 strain.</title>
        <authorList>
            <person name="Banks D.J."/>
            <person name="Porcella S.F."/>
            <person name="Barbian K.D."/>
            <person name="Beres S.B."/>
            <person name="Philips L.E."/>
            <person name="Voyich J.M."/>
            <person name="DeLeo F.R."/>
            <person name="Martin J.M."/>
            <person name="Somerville G.A."/>
            <person name="Musser J.M."/>
        </authorList>
    </citation>
    <scope>NUCLEOTIDE SEQUENCE [LARGE SCALE GENOMIC DNA]</scope>
    <source>
        <strain>ATCC BAA-946 / MGAS10394</strain>
    </source>
</reference>
<gene>
    <name evidence="1" type="primary">rplR</name>
    <name type="ordered locus">M6_Spy0109</name>
</gene>
<organism>
    <name type="scientific">Streptococcus pyogenes serotype M6 (strain ATCC BAA-946 / MGAS10394)</name>
    <dbReference type="NCBI Taxonomy" id="286636"/>
    <lineage>
        <taxon>Bacteria</taxon>
        <taxon>Bacillati</taxon>
        <taxon>Bacillota</taxon>
        <taxon>Bacilli</taxon>
        <taxon>Lactobacillales</taxon>
        <taxon>Streptococcaceae</taxon>
        <taxon>Streptococcus</taxon>
    </lineage>
</organism>
<dbReference type="EMBL" id="CP000003">
    <property type="protein sequence ID" value="AAT86244.1"/>
    <property type="status" value="ALT_INIT"/>
    <property type="molecule type" value="Genomic_DNA"/>
</dbReference>
<dbReference type="RefSeq" id="WP_002987751.1">
    <property type="nucleotide sequence ID" value="NC_006086.1"/>
</dbReference>
<dbReference type="SMR" id="Q5XEB9"/>
<dbReference type="GeneID" id="69900042"/>
<dbReference type="KEGG" id="spa:M6_Spy0109"/>
<dbReference type="HOGENOM" id="CLU_098841_0_1_9"/>
<dbReference type="Proteomes" id="UP000001167">
    <property type="component" value="Chromosome"/>
</dbReference>
<dbReference type="GO" id="GO:0022625">
    <property type="term" value="C:cytosolic large ribosomal subunit"/>
    <property type="evidence" value="ECO:0007669"/>
    <property type="project" value="TreeGrafter"/>
</dbReference>
<dbReference type="GO" id="GO:0008097">
    <property type="term" value="F:5S rRNA binding"/>
    <property type="evidence" value="ECO:0007669"/>
    <property type="project" value="TreeGrafter"/>
</dbReference>
<dbReference type="GO" id="GO:0003735">
    <property type="term" value="F:structural constituent of ribosome"/>
    <property type="evidence" value="ECO:0007669"/>
    <property type="project" value="InterPro"/>
</dbReference>
<dbReference type="GO" id="GO:0006412">
    <property type="term" value="P:translation"/>
    <property type="evidence" value="ECO:0007669"/>
    <property type="project" value="UniProtKB-UniRule"/>
</dbReference>
<dbReference type="CDD" id="cd00432">
    <property type="entry name" value="Ribosomal_L18_L5e"/>
    <property type="match status" value="1"/>
</dbReference>
<dbReference type="FunFam" id="3.30.420.100:FF:000001">
    <property type="entry name" value="50S ribosomal protein L18"/>
    <property type="match status" value="1"/>
</dbReference>
<dbReference type="Gene3D" id="3.30.420.100">
    <property type="match status" value="1"/>
</dbReference>
<dbReference type="HAMAP" id="MF_01337_B">
    <property type="entry name" value="Ribosomal_uL18_B"/>
    <property type="match status" value="1"/>
</dbReference>
<dbReference type="InterPro" id="IPR004389">
    <property type="entry name" value="Ribosomal_uL18_bac-type"/>
</dbReference>
<dbReference type="InterPro" id="IPR005484">
    <property type="entry name" value="Ribosomal_uL18_bac/euk"/>
</dbReference>
<dbReference type="NCBIfam" id="TIGR00060">
    <property type="entry name" value="L18_bact"/>
    <property type="match status" value="1"/>
</dbReference>
<dbReference type="PANTHER" id="PTHR12899">
    <property type="entry name" value="39S RIBOSOMAL PROTEIN L18, MITOCHONDRIAL"/>
    <property type="match status" value="1"/>
</dbReference>
<dbReference type="PANTHER" id="PTHR12899:SF3">
    <property type="entry name" value="LARGE RIBOSOMAL SUBUNIT PROTEIN UL18M"/>
    <property type="match status" value="1"/>
</dbReference>
<dbReference type="Pfam" id="PF00861">
    <property type="entry name" value="Ribosomal_L18p"/>
    <property type="match status" value="1"/>
</dbReference>
<dbReference type="SUPFAM" id="SSF53137">
    <property type="entry name" value="Translational machinery components"/>
    <property type="match status" value="1"/>
</dbReference>
<name>RL18_STRP6</name>
<feature type="chain" id="PRO_0000131361" description="Large ribosomal subunit protein uL18">
    <location>
        <begin position="1"/>
        <end position="118"/>
    </location>
</feature>
<feature type="region of interest" description="Disordered" evidence="2">
    <location>
        <begin position="1"/>
        <end position="25"/>
    </location>
</feature>
<feature type="compositionally biased region" description="Basic residues" evidence="2">
    <location>
        <begin position="10"/>
        <end position="20"/>
    </location>
</feature>
<sequence length="118" mass="12866">MISKPDKNKIRQKRHRRVRGKLSGTADRPRLNVFRSNTGIYAQVIDDVAGVTLASASTLDKDVSKGTKTEQAVVVGKLVAERAVAKGISEVVFDRGGYLYHGRVKALADAARENGLKF</sequence>
<proteinExistence type="inferred from homology"/>
<comment type="function">
    <text evidence="1">This is one of the proteins that bind and probably mediate the attachment of the 5S RNA into the large ribosomal subunit, where it forms part of the central protuberance.</text>
</comment>
<comment type="subunit">
    <text evidence="1">Part of the 50S ribosomal subunit; part of the 5S rRNA/L5/L18/L25 subcomplex. Contacts the 5S and 23S rRNAs.</text>
</comment>
<comment type="similarity">
    <text evidence="1">Belongs to the universal ribosomal protein uL18 family.</text>
</comment>
<comment type="sequence caution" evidence="3">
    <conflict type="erroneous initiation">
        <sequence resource="EMBL-CDS" id="AAT86244"/>
    </conflict>
</comment>